<evidence type="ECO:0000255" key="1">
    <source>
        <dbReference type="HAMAP-Rule" id="MF_00196"/>
    </source>
</evidence>
<keyword id="KW-0520">NAD</keyword>
<keyword id="KW-0560">Oxidoreductase</keyword>
<keyword id="KW-1185">Reference proteome</keyword>
<accession>Q89A37</accession>
<reference key="1">
    <citation type="journal article" date="2003" name="Proc. Natl. Acad. Sci. U.S.A.">
        <title>Reductive genome evolution in Buchnera aphidicola.</title>
        <authorList>
            <person name="van Ham R.C.H.J."/>
            <person name="Kamerbeek J."/>
            <person name="Palacios C."/>
            <person name="Rausell C."/>
            <person name="Abascal F."/>
            <person name="Bastolla U."/>
            <person name="Fernandez J.M."/>
            <person name="Jimenez L."/>
            <person name="Postigo M."/>
            <person name="Silva F.J."/>
            <person name="Tamames J."/>
            <person name="Viguera E."/>
            <person name="Latorre A."/>
            <person name="Valencia A."/>
            <person name="Moran F."/>
            <person name="Moya A."/>
        </authorList>
    </citation>
    <scope>NUCLEOTIDE SEQUENCE [LARGE SCALE GENOMIC DNA]</scope>
    <source>
        <strain>Bp</strain>
    </source>
</reference>
<name>MTLD_BUCBP</name>
<sequence length="390" mass="44567">MNALHFGAGNIGRGFIGPLLLKSGFNLTFVDNNQAIVDAINRHQKYDITVVGNNFSYITTVKKVKAIYINDPNIYFKIAKINVITISVGVHAINSLVVFFEKLIRYKIETNDFVFLTIIACENVFRCASKLKENIKILLPGIYHKYLDKNISFVDSVVDKIVCPNDKNNSDDINLSVKVEKFSEWIVDCTQFKHDRPNIIGMIYSNHLDAFFERKLFTLNTGHAIAAYLGLLIGYKNIYQAILDPLIFNIVYGAMKESGMVLIRKYNFFTDSEHKNYILKILSRFKNIYLTDSLKRVGRNPLQKLKKDDRLISPLIDTIKYNLPNANLMKGIAAALCYIDEKDIEAKKLRNMIINKGIKYVLSKISSLDSSLLIISEISIYFNIFMKVNI</sequence>
<organism>
    <name type="scientific">Buchnera aphidicola subsp. Baizongia pistaciae (strain Bp)</name>
    <dbReference type="NCBI Taxonomy" id="224915"/>
    <lineage>
        <taxon>Bacteria</taxon>
        <taxon>Pseudomonadati</taxon>
        <taxon>Pseudomonadota</taxon>
        <taxon>Gammaproteobacteria</taxon>
        <taxon>Enterobacterales</taxon>
        <taxon>Erwiniaceae</taxon>
        <taxon>Buchnera</taxon>
    </lineage>
</organism>
<comment type="catalytic activity">
    <reaction evidence="1">
        <text>D-mannitol 1-phosphate + NAD(+) = beta-D-fructose 6-phosphate + NADH + H(+)</text>
        <dbReference type="Rhea" id="RHEA:19661"/>
        <dbReference type="ChEBI" id="CHEBI:15378"/>
        <dbReference type="ChEBI" id="CHEBI:57540"/>
        <dbReference type="ChEBI" id="CHEBI:57634"/>
        <dbReference type="ChEBI" id="CHEBI:57945"/>
        <dbReference type="ChEBI" id="CHEBI:61381"/>
        <dbReference type="EC" id="1.1.1.17"/>
    </reaction>
</comment>
<comment type="similarity">
    <text evidence="1">Belongs to the mannitol dehydrogenase family.</text>
</comment>
<gene>
    <name evidence="1" type="primary">mtlD</name>
    <name type="ordered locus">bbp_516</name>
</gene>
<protein>
    <recommendedName>
        <fullName evidence="1">Mannitol-1-phosphate 5-dehydrogenase</fullName>
        <ecNumber evidence="1">1.1.1.17</ecNumber>
    </recommendedName>
</protein>
<feature type="chain" id="PRO_0000170701" description="Mannitol-1-phosphate 5-dehydrogenase">
    <location>
        <begin position="1"/>
        <end position="390"/>
    </location>
</feature>
<feature type="binding site" evidence="1">
    <location>
        <begin position="3"/>
        <end position="14"/>
    </location>
    <ligand>
        <name>NAD(+)</name>
        <dbReference type="ChEBI" id="CHEBI:57540"/>
    </ligand>
</feature>
<dbReference type="EC" id="1.1.1.17" evidence="1"/>
<dbReference type="EMBL" id="AE016826">
    <property type="protein sequence ID" value="AAO27219.1"/>
    <property type="molecule type" value="Genomic_DNA"/>
</dbReference>
<dbReference type="RefSeq" id="WP_011091620.1">
    <property type="nucleotide sequence ID" value="NC_004545.1"/>
</dbReference>
<dbReference type="SMR" id="Q89A37"/>
<dbReference type="STRING" id="224915.bbp_516"/>
<dbReference type="KEGG" id="bab:bbp_516"/>
<dbReference type="eggNOG" id="COG0246">
    <property type="taxonomic scope" value="Bacteria"/>
</dbReference>
<dbReference type="HOGENOM" id="CLU_036089_2_0_6"/>
<dbReference type="OrthoDB" id="271711at2"/>
<dbReference type="Proteomes" id="UP000000601">
    <property type="component" value="Chromosome"/>
</dbReference>
<dbReference type="GO" id="GO:0005829">
    <property type="term" value="C:cytosol"/>
    <property type="evidence" value="ECO:0007669"/>
    <property type="project" value="TreeGrafter"/>
</dbReference>
<dbReference type="GO" id="GO:0008926">
    <property type="term" value="F:mannitol-1-phosphate 5-dehydrogenase activity"/>
    <property type="evidence" value="ECO:0007669"/>
    <property type="project" value="UniProtKB-UniRule"/>
</dbReference>
<dbReference type="GO" id="GO:0019592">
    <property type="term" value="P:mannitol catabolic process"/>
    <property type="evidence" value="ECO:0007669"/>
    <property type="project" value="TreeGrafter"/>
</dbReference>
<dbReference type="Gene3D" id="1.10.1040.10">
    <property type="entry name" value="N-(1-d-carboxylethyl)-l-norvaline Dehydrogenase, domain 2"/>
    <property type="match status" value="1"/>
</dbReference>
<dbReference type="Gene3D" id="3.40.50.720">
    <property type="entry name" value="NAD(P)-binding Rossmann-like Domain"/>
    <property type="match status" value="1"/>
</dbReference>
<dbReference type="HAMAP" id="MF_00196">
    <property type="entry name" value="Mannitol_dehydrog"/>
    <property type="match status" value="1"/>
</dbReference>
<dbReference type="InterPro" id="IPR008927">
    <property type="entry name" value="6-PGluconate_DH-like_C_sf"/>
</dbReference>
<dbReference type="InterPro" id="IPR013328">
    <property type="entry name" value="6PGD_dom2"/>
</dbReference>
<dbReference type="InterPro" id="IPR023028">
    <property type="entry name" value="Mannitol_1_phos_5_DH"/>
</dbReference>
<dbReference type="InterPro" id="IPR000669">
    <property type="entry name" value="Mannitol_DH"/>
</dbReference>
<dbReference type="InterPro" id="IPR013118">
    <property type="entry name" value="Mannitol_DH_C"/>
</dbReference>
<dbReference type="InterPro" id="IPR013131">
    <property type="entry name" value="Mannitol_DH_N"/>
</dbReference>
<dbReference type="InterPro" id="IPR036291">
    <property type="entry name" value="NAD(P)-bd_dom_sf"/>
</dbReference>
<dbReference type="NCBIfam" id="NF002646">
    <property type="entry name" value="PRK02318.1-2"/>
    <property type="match status" value="1"/>
</dbReference>
<dbReference type="NCBIfam" id="NF002650">
    <property type="entry name" value="PRK02318.2-2"/>
    <property type="match status" value="1"/>
</dbReference>
<dbReference type="PANTHER" id="PTHR30524:SF0">
    <property type="entry name" value="ALTRONATE OXIDOREDUCTASE-RELATED"/>
    <property type="match status" value="1"/>
</dbReference>
<dbReference type="PANTHER" id="PTHR30524">
    <property type="entry name" value="MANNITOL-1-PHOSPHATE 5-DEHYDROGENASE"/>
    <property type="match status" value="1"/>
</dbReference>
<dbReference type="Pfam" id="PF01232">
    <property type="entry name" value="Mannitol_dh"/>
    <property type="match status" value="1"/>
</dbReference>
<dbReference type="Pfam" id="PF08125">
    <property type="entry name" value="Mannitol_dh_C"/>
    <property type="match status" value="1"/>
</dbReference>
<dbReference type="PRINTS" id="PR00084">
    <property type="entry name" value="MTLDHDRGNASE"/>
</dbReference>
<dbReference type="SUPFAM" id="SSF48179">
    <property type="entry name" value="6-phosphogluconate dehydrogenase C-terminal domain-like"/>
    <property type="match status" value="1"/>
</dbReference>
<dbReference type="SUPFAM" id="SSF51735">
    <property type="entry name" value="NAD(P)-binding Rossmann-fold domains"/>
    <property type="match status" value="1"/>
</dbReference>
<proteinExistence type="inferred from homology"/>